<feature type="chain" id="PRO_0000107291" description="Uncharacterized protein AF_0952">
    <location>
        <begin position="1"/>
        <end position="378"/>
    </location>
</feature>
<feature type="domain" description="Glutamine amidotransferase type-2" evidence="2">
    <location>
        <begin position="16"/>
        <end position="378"/>
    </location>
</feature>
<feature type="active site" description="For GATase activity" evidence="1">
    <location>
        <position position="16"/>
    </location>
</feature>
<gene>
    <name type="ordered locus">AF_0952</name>
</gene>
<organism>
    <name type="scientific">Archaeoglobus fulgidus (strain ATCC 49558 / DSM 4304 / JCM 9628 / NBRC 100126 / VC-16)</name>
    <dbReference type="NCBI Taxonomy" id="224325"/>
    <lineage>
        <taxon>Archaea</taxon>
        <taxon>Methanobacteriati</taxon>
        <taxon>Methanobacteriota</taxon>
        <taxon>Archaeoglobi</taxon>
        <taxon>Archaeoglobales</taxon>
        <taxon>Archaeoglobaceae</taxon>
        <taxon>Archaeoglobus</taxon>
    </lineage>
</organism>
<reference key="1">
    <citation type="journal article" date="1997" name="Nature">
        <title>The complete genome sequence of the hyperthermophilic, sulphate-reducing archaeon Archaeoglobus fulgidus.</title>
        <authorList>
            <person name="Klenk H.-P."/>
            <person name="Clayton R.A."/>
            <person name="Tomb J.-F."/>
            <person name="White O."/>
            <person name="Nelson K.E."/>
            <person name="Ketchum K.A."/>
            <person name="Dodson R.J."/>
            <person name="Gwinn M.L."/>
            <person name="Hickey E.K."/>
            <person name="Peterson J.D."/>
            <person name="Richardson D.L."/>
            <person name="Kerlavage A.R."/>
            <person name="Graham D.E."/>
            <person name="Kyrpides N.C."/>
            <person name="Fleischmann R.D."/>
            <person name="Quackenbush J."/>
            <person name="Lee N.H."/>
            <person name="Sutton G.G."/>
            <person name="Gill S.R."/>
            <person name="Kirkness E.F."/>
            <person name="Dougherty B.A."/>
            <person name="McKenney K."/>
            <person name="Adams M.D."/>
            <person name="Loftus B.J."/>
            <person name="Peterson S.N."/>
            <person name="Reich C.I."/>
            <person name="McNeil L.K."/>
            <person name="Badger J.H."/>
            <person name="Glodek A."/>
            <person name="Zhou L."/>
            <person name="Overbeek R."/>
            <person name="Gocayne J.D."/>
            <person name="Weidman J.F."/>
            <person name="McDonald L.A."/>
            <person name="Utterback T.R."/>
            <person name="Cotton M.D."/>
            <person name="Spriggs T."/>
            <person name="Artiach P."/>
            <person name="Kaine B.P."/>
            <person name="Sykes S.M."/>
            <person name="Sadow P.W."/>
            <person name="D'Andrea K.P."/>
            <person name="Bowman C."/>
            <person name="Fujii C."/>
            <person name="Garland S.A."/>
            <person name="Mason T.M."/>
            <person name="Olsen G.J."/>
            <person name="Fraser C.M."/>
            <person name="Smith H.O."/>
            <person name="Woese C.R."/>
            <person name="Venter J.C."/>
        </authorList>
    </citation>
    <scope>NUCLEOTIDE SEQUENCE [LARGE SCALE GENOMIC DNA]</scope>
    <source>
        <strain>ATCC 49558 / DSM 4304 / JCM 9628 / NBRC 100126 / VC-16</strain>
    </source>
</reference>
<sequence length="378" mass="43054">MRGKRVVLPDKDHQACGLFGVIDRSGRRFSGEMAINAMINMKVRGNGLGGGFAAYGIYPEYKDYYALHVMFQDWDMEAKHRVDEFLDANFDVVYAEEIPVNPEANVASPPLFWRYFVSPNKKGDEKKLSDDDYVVKKVMEINTKINNAYVVSSGKDMGVFKGVGFPEDIAEYFMLAEEYKGYMWTAHSRFPTNTPGWWGGAHPFCILDWTVVHNGEISSYGTNKRYLEMFGYYCTLLTDTEVMAYAVDLLMRKQGLPIEIVSKIFAPPMWDHIDIMDEKKKKFYTALRMNYGPLLINGPWTIVVARHGEMFGITDRIRLRPITSGEKGDLLFVSSEESAIRAVCPDLDRVYTPMGGEPVIGRLKSREKELAKQLSEVE</sequence>
<evidence type="ECO:0000250" key="1"/>
<evidence type="ECO:0000255" key="2">
    <source>
        <dbReference type="PROSITE-ProRule" id="PRU00609"/>
    </source>
</evidence>
<keyword id="KW-0315">Glutamine amidotransferase</keyword>
<keyword id="KW-1185">Reference proteome</keyword>
<accession>O29310</accession>
<name>Y952_ARCFU</name>
<dbReference type="EMBL" id="AE000782">
    <property type="protein sequence ID" value="AAB90288.1"/>
    <property type="molecule type" value="Genomic_DNA"/>
</dbReference>
<dbReference type="PIR" id="H69368">
    <property type="entry name" value="H69368"/>
</dbReference>
<dbReference type="RefSeq" id="WP_010878452.1">
    <property type="nucleotide sequence ID" value="NC_000917.1"/>
</dbReference>
<dbReference type="SMR" id="O29310"/>
<dbReference type="STRING" id="224325.AF_0952"/>
<dbReference type="MEROPS" id="C44.A09"/>
<dbReference type="PaxDb" id="224325-AF_0952"/>
<dbReference type="DNASU" id="1484175"/>
<dbReference type="EnsemblBacteria" id="AAB90288">
    <property type="protein sequence ID" value="AAB90288"/>
    <property type="gene ID" value="AF_0952"/>
</dbReference>
<dbReference type="KEGG" id="afu:AF_0952"/>
<dbReference type="eggNOG" id="arCOG00095">
    <property type="taxonomic scope" value="Archaea"/>
</dbReference>
<dbReference type="HOGENOM" id="CLU_061941_0_0_2"/>
<dbReference type="OrthoDB" id="372195at2157"/>
<dbReference type="PhylomeDB" id="O29310"/>
<dbReference type="Proteomes" id="UP000002199">
    <property type="component" value="Chromosome"/>
</dbReference>
<dbReference type="CDD" id="cd01907">
    <property type="entry name" value="GlxB"/>
    <property type="match status" value="1"/>
</dbReference>
<dbReference type="Gene3D" id="3.60.20.10">
    <property type="entry name" value="Glutamine Phosphoribosylpyrophosphate, subunit 1, domain 1"/>
    <property type="match status" value="1"/>
</dbReference>
<dbReference type="InterPro" id="IPR017932">
    <property type="entry name" value="GATase_2_dom"/>
</dbReference>
<dbReference type="InterPro" id="IPR012375">
    <property type="entry name" value="Glu_synth_lsu_1"/>
</dbReference>
<dbReference type="InterPro" id="IPR029055">
    <property type="entry name" value="Ntn_hydrolases_N"/>
</dbReference>
<dbReference type="Pfam" id="PF00310">
    <property type="entry name" value="GATase_2"/>
    <property type="match status" value="1"/>
</dbReference>
<dbReference type="PIRSF" id="PIRSF018774">
    <property type="entry name" value="GOGAT_lg_dom1"/>
    <property type="match status" value="1"/>
</dbReference>
<dbReference type="SUPFAM" id="SSF56235">
    <property type="entry name" value="N-terminal nucleophile aminohydrolases (Ntn hydrolases)"/>
    <property type="match status" value="1"/>
</dbReference>
<dbReference type="PROSITE" id="PS51278">
    <property type="entry name" value="GATASE_TYPE_2"/>
    <property type="match status" value="1"/>
</dbReference>
<protein>
    <recommendedName>
        <fullName>Uncharacterized protein AF_0952</fullName>
    </recommendedName>
</protein>
<proteinExistence type="predicted"/>